<comment type="function">
    <text evidence="1">Modifies, by uridylylation and deuridylylation, the PII regulatory proteins (GlnB and homologs), in response to the nitrogen status of the cell that GlnD senses through the glutamine level. Under low glutamine levels, catalyzes the conversion of the PII proteins and UTP to PII-UMP and PPi, while under higher glutamine levels, GlnD hydrolyzes PII-UMP to PII and UMP (deuridylylation). Thus, controls uridylylation state and activity of the PII proteins, and plays an important role in the regulation of nitrogen assimilation and metabolism.</text>
</comment>
<comment type="catalytic activity">
    <reaction evidence="1">
        <text>[protein-PII]-L-tyrosine + UTP = [protein-PII]-uridylyl-L-tyrosine + diphosphate</text>
        <dbReference type="Rhea" id="RHEA:13673"/>
        <dbReference type="Rhea" id="RHEA-COMP:12147"/>
        <dbReference type="Rhea" id="RHEA-COMP:12148"/>
        <dbReference type="ChEBI" id="CHEBI:33019"/>
        <dbReference type="ChEBI" id="CHEBI:46398"/>
        <dbReference type="ChEBI" id="CHEBI:46858"/>
        <dbReference type="ChEBI" id="CHEBI:90602"/>
        <dbReference type="EC" id="2.7.7.59"/>
    </reaction>
</comment>
<comment type="catalytic activity">
    <reaction evidence="1">
        <text>[protein-PII]-uridylyl-L-tyrosine + H2O = [protein-PII]-L-tyrosine + UMP + H(+)</text>
        <dbReference type="Rhea" id="RHEA:48600"/>
        <dbReference type="Rhea" id="RHEA-COMP:12147"/>
        <dbReference type="Rhea" id="RHEA-COMP:12148"/>
        <dbReference type="ChEBI" id="CHEBI:15377"/>
        <dbReference type="ChEBI" id="CHEBI:15378"/>
        <dbReference type="ChEBI" id="CHEBI:46858"/>
        <dbReference type="ChEBI" id="CHEBI:57865"/>
        <dbReference type="ChEBI" id="CHEBI:90602"/>
    </reaction>
</comment>
<comment type="cofactor">
    <cofactor evidence="1">
        <name>Mg(2+)</name>
        <dbReference type="ChEBI" id="CHEBI:18420"/>
    </cofactor>
</comment>
<comment type="activity regulation">
    <text evidence="1">Uridylyltransferase (UTase) activity is inhibited by glutamine, while glutamine activates uridylyl-removing (UR) activity.</text>
</comment>
<comment type="domain">
    <text evidence="1">Has four distinct domains: an N-terminal nucleotidyltransferase (NT) domain responsible for UTase activity, a central HD domain that encodes UR activity, and two C-terminal ACT domains that seem to have a role in glutamine sensing.</text>
</comment>
<comment type="similarity">
    <text evidence="1">Belongs to the GlnD family.</text>
</comment>
<evidence type="ECO:0000255" key="1">
    <source>
        <dbReference type="HAMAP-Rule" id="MF_00277"/>
    </source>
</evidence>
<evidence type="ECO:0000255" key="2">
    <source>
        <dbReference type="PROSITE-ProRule" id="PRU01175"/>
    </source>
</evidence>
<keyword id="KW-0378">Hydrolase</keyword>
<keyword id="KW-0460">Magnesium</keyword>
<keyword id="KW-0511">Multifunctional enzyme</keyword>
<keyword id="KW-0548">Nucleotidyltransferase</keyword>
<keyword id="KW-1185">Reference proteome</keyword>
<keyword id="KW-0677">Repeat</keyword>
<keyword id="KW-0808">Transferase</keyword>
<accession>Q3SKP1</accession>
<protein>
    <recommendedName>
        <fullName evidence="1">Bifunctional uridylyltransferase/uridylyl-removing enzyme</fullName>
        <shortName evidence="1">UTase/UR</shortName>
    </recommendedName>
    <alternativeName>
        <fullName evidence="1">Bifunctional [protein-PII] modification enzyme</fullName>
    </alternativeName>
    <alternativeName>
        <fullName evidence="1">Bifunctional nitrogen sensor protein</fullName>
    </alternativeName>
    <domain>
        <recommendedName>
            <fullName evidence="1">[Protein-PII] uridylyltransferase</fullName>
            <shortName evidence="1">PII uridylyltransferase</shortName>
            <shortName evidence="1">UTase</shortName>
            <ecNumber evidence="1">2.7.7.59</ecNumber>
        </recommendedName>
    </domain>
    <domain>
        <recommendedName>
            <fullName evidence="1">[Protein-PII]-UMP uridylyl-removing enzyme</fullName>
            <shortName evidence="1">UR</shortName>
            <ecNumber evidence="1">3.1.4.-</ecNumber>
        </recommendedName>
    </domain>
</protein>
<reference key="1">
    <citation type="journal article" date="2006" name="J. Bacteriol.">
        <title>The genome sequence of the obligately chemolithoautotrophic, facultatively anaerobic bacterium Thiobacillus denitrificans.</title>
        <authorList>
            <person name="Beller H.R."/>
            <person name="Chain P.S."/>
            <person name="Letain T.E."/>
            <person name="Chakicherla A."/>
            <person name="Larimer F.W."/>
            <person name="Richardson P.M."/>
            <person name="Coleman M.A."/>
            <person name="Wood A.P."/>
            <person name="Kelly D.P."/>
        </authorList>
    </citation>
    <scope>NUCLEOTIDE SEQUENCE [LARGE SCALE GENOMIC DNA]</scope>
    <source>
        <strain>ATCC 25259 / T1</strain>
    </source>
</reference>
<sequence length="850" mass="95305">MSARPFADLRERLKSGRASLAAAYREKPRAAHYLARHAALVDALLAELSTRLGLARGICLVAVGGYGRGELFPGSDVDVMLLLPAEPLEAERQALESWVQACWDVGLEIGHSVRTVDACLAEADADITVETNLLEARRVWGATALFDDFGRRFRARFDAQRFFDGKLAEQHARHARFDDSAYKLEPNLKDSPGGLRDLHTIHWLAQACDIDAGWSGIARAGLLTEGEARRVAREERWLAKLRIHLHLLAGRREDRLAFDYQSELAACLGLAPTAHRRAGERLMQGYFRAAKLVQRANDILIQSLRVRLFPVVAPPLPIDDDFQLRAGLLEARDPDVFLRKPDALLRAFLVYARHPQLAGFEPTTLRAVWRASARVDRAFRATPAHRALFIALLREPLGVTRALRAMHRYGLLGRYIPAFGRIVGQMQHDLFHVYTVDEHILTVLRNLRRFTVAQLAHEFPLASRLIAAFDKPELLYLAALFHDIAKGRGGDHSALGALDARGFCRQHGLDKTDTDLVAWLVDMHLVMSRTSQKEDISDPKVIAAFAARVGDTRRLDALYLLTVADIRGTSPTVWNAWKGKLLEDLYHAAFARLQGADLAIAGIAARREEARVNLALYGLPRDAADALWRHLDKAYFARFDARDMAWHARMLWRRDATAGAVVRARLSPAGEGIQVMVYAPDRPDIFVRICAFFARIQYTVLEAKIHTTRNGYALDSFQVMDLAHRNIHYRDFLAFVEYELARDLDPARPLQAVQPGRLSRHQRHHPYPAAVHLEADRGGDGQVLSITCADRGGLLFAIAEELMRHEISVYAAKIDTLGERVEDTFLIRGERLNAPPERAALENELRGVLG</sequence>
<dbReference type="EC" id="2.7.7.59" evidence="1"/>
<dbReference type="EC" id="3.1.4.-" evidence="1"/>
<dbReference type="EMBL" id="CP000116">
    <property type="protein sequence ID" value="AAZ96736.1"/>
    <property type="molecule type" value="Genomic_DNA"/>
</dbReference>
<dbReference type="RefSeq" id="WP_011311295.1">
    <property type="nucleotide sequence ID" value="NC_007404.1"/>
</dbReference>
<dbReference type="SMR" id="Q3SKP1"/>
<dbReference type="STRING" id="292415.Tbd_0783"/>
<dbReference type="KEGG" id="tbd:Tbd_0783"/>
<dbReference type="eggNOG" id="COG2844">
    <property type="taxonomic scope" value="Bacteria"/>
</dbReference>
<dbReference type="HOGENOM" id="CLU_012833_0_0_4"/>
<dbReference type="OrthoDB" id="9758038at2"/>
<dbReference type="Proteomes" id="UP000008291">
    <property type="component" value="Chromosome"/>
</dbReference>
<dbReference type="GO" id="GO:0008773">
    <property type="term" value="F:[protein-PII] uridylyltransferase activity"/>
    <property type="evidence" value="ECO:0007669"/>
    <property type="project" value="UniProtKB-UniRule"/>
</dbReference>
<dbReference type="GO" id="GO:0008081">
    <property type="term" value="F:phosphoric diester hydrolase activity"/>
    <property type="evidence" value="ECO:0007669"/>
    <property type="project" value="UniProtKB-UniRule"/>
</dbReference>
<dbReference type="GO" id="GO:0006808">
    <property type="term" value="P:regulation of nitrogen utilization"/>
    <property type="evidence" value="ECO:0007669"/>
    <property type="project" value="UniProtKB-UniRule"/>
</dbReference>
<dbReference type="CDD" id="cd04899">
    <property type="entry name" value="ACT_ACR-UUR-like_2"/>
    <property type="match status" value="1"/>
</dbReference>
<dbReference type="CDD" id="cd04900">
    <property type="entry name" value="ACT_UUR-like_1"/>
    <property type="match status" value="1"/>
</dbReference>
<dbReference type="CDD" id="cd00077">
    <property type="entry name" value="HDc"/>
    <property type="match status" value="1"/>
</dbReference>
<dbReference type="CDD" id="cd05401">
    <property type="entry name" value="NT_GlnE_GlnD_like"/>
    <property type="match status" value="1"/>
</dbReference>
<dbReference type="Gene3D" id="1.10.3090.10">
    <property type="entry name" value="cca-adding enzyme, domain 2"/>
    <property type="match status" value="1"/>
</dbReference>
<dbReference type="HAMAP" id="MF_00277">
    <property type="entry name" value="PII_uridylyl_transf"/>
    <property type="match status" value="1"/>
</dbReference>
<dbReference type="InterPro" id="IPR045865">
    <property type="entry name" value="ACT-like_dom_sf"/>
</dbReference>
<dbReference type="InterPro" id="IPR002912">
    <property type="entry name" value="ACT_dom"/>
</dbReference>
<dbReference type="InterPro" id="IPR003607">
    <property type="entry name" value="HD/PDEase_dom"/>
</dbReference>
<dbReference type="InterPro" id="IPR006674">
    <property type="entry name" value="HD_domain"/>
</dbReference>
<dbReference type="InterPro" id="IPR043519">
    <property type="entry name" value="NT_sf"/>
</dbReference>
<dbReference type="InterPro" id="IPR013546">
    <property type="entry name" value="PII_UdlTrfase/GS_AdlTrfase"/>
</dbReference>
<dbReference type="InterPro" id="IPR002934">
    <property type="entry name" value="Polymerase_NTP_transf_dom"/>
</dbReference>
<dbReference type="InterPro" id="IPR010043">
    <property type="entry name" value="UTase/UR"/>
</dbReference>
<dbReference type="NCBIfam" id="NF002837">
    <property type="entry name" value="PRK03059.1"/>
    <property type="match status" value="1"/>
</dbReference>
<dbReference type="NCBIfam" id="TIGR01693">
    <property type="entry name" value="UTase_glnD"/>
    <property type="match status" value="1"/>
</dbReference>
<dbReference type="PANTHER" id="PTHR47320">
    <property type="entry name" value="BIFUNCTIONAL URIDYLYLTRANSFERASE/URIDYLYL-REMOVING ENZYME"/>
    <property type="match status" value="1"/>
</dbReference>
<dbReference type="PANTHER" id="PTHR47320:SF1">
    <property type="entry name" value="BIFUNCTIONAL URIDYLYLTRANSFERASE_URIDYLYL-REMOVING ENZYME"/>
    <property type="match status" value="1"/>
</dbReference>
<dbReference type="Pfam" id="PF08335">
    <property type="entry name" value="GlnD_UR_UTase"/>
    <property type="match status" value="1"/>
</dbReference>
<dbReference type="Pfam" id="PF01966">
    <property type="entry name" value="HD"/>
    <property type="match status" value="1"/>
</dbReference>
<dbReference type="Pfam" id="PF01909">
    <property type="entry name" value="NTP_transf_2"/>
    <property type="match status" value="1"/>
</dbReference>
<dbReference type="PIRSF" id="PIRSF006288">
    <property type="entry name" value="PII_uridyltransf"/>
    <property type="match status" value="1"/>
</dbReference>
<dbReference type="SMART" id="SM00471">
    <property type="entry name" value="HDc"/>
    <property type="match status" value="1"/>
</dbReference>
<dbReference type="SUPFAM" id="SSF55021">
    <property type="entry name" value="ACT-like"/>
    <property type="match status" value="2"/>
</dbReference>
<dbReference type="SUPFAM" id="SSF109604">
    <property type="entry name" value="HD-domain/PDEase-like"/>
    <property type="match status" value="1"/>
</dbReference>
<dbReference type="SUPFAM" id="SSF81301">
    <property type="entry name" value="Nucleotidyltransferase"/>
    <property type="match status" value="1"/>
</dbReference>
<dbReference type="SUPFAM" id="SSF81593">
    <property type="entry name" value="Nucleotidyltransferase substrate binding subunit/domain"/>
    <property type="match status" value="1"/>
</dbReference>
<dbReference type="PROSITE" id="PS51671">
    <property type="entry name" value="ACT"/>
    <property type="match status" value="2"/>
</dbReference>
<dbReference type="PROSITE" id="PS51831">
    <property type="entry name" value="HD"/>
    <property type="match status" value="1"/>
</dbReference>
<name>GLND_THIDA</name>
<proteinExistence type="inferred from homology"/>
<gene>
    <name evidence="1" type="primary">glnD</name>
    <name type="ordered locus">Tbd_0783</name>
</gene>
<feature type="chain" id="PRO_0000231695" description="Bifunctional uridylyltransferase/uridylyl-removing enzyme">
    <location>
        <begin position="1"/>
        <end position="850"/>
    </location>
</feature>
<feature type="domain" description="HD" evidence="2">
    <location>
        <begin position="436"/>
        <end position="558"/>
    </location>
</feature>
<feature type="domain" description="ACT 1" evidence="1">
    <location>
        <begin position="674"/>
        <end position="755"/>
    </location>
</feature>
<feature type="domain" description="ACT 2" evidence="1">
    <location>
        <begin position="783"/>
        <end position="850"/>
    </location>
</feature>
<feature type="region of interest" description="Uridylyltransferase">
    <location>
        <begin position="1"/>
        <end position="317"/>
    </location>
</feature>
<feature type="region of interest" description="Uridylyl-removing">
    <location>
        <begin position="318"/>
        <end position="673"/>
    </location>
</feature>
<organism>
    <name type="scientific">Thiobacillus denitrificans (strain ATCC 25259 / T1)</name>
    <dbReference type="NCBI Taxonomy" id="292415"/>
    <lineage>
        <taxon>Bacteria</taxon>
        <taxon>Pseudomonadati</taxon>
        <taxon>Pseudomonadota</taxon>
        <taxon>Betaproteobacteria</taxon>
        <taxon>Nitrosomonadales</taxon>
        <taxon>Thiobacillaceae</taxon>
        <taxon>Thiobacillus</taxon>
    </lineage>
</organism>